<evidence type="ECO:0000269" key="1">
    <source>
    </source>
</evidence>
<evidence type="ECO:0000269" key="2">
    <source>
    </source>
</evidence>
<evidence type="ECO:0000305" key="3"/>
<evidence type="ECO:0007744" key="4">
    <source>
        <dbReference type="PDB" id="3JD5"/>
    </source>
</evidence>
<evidence type="ECO:0007829" key="5">
    <source>
        <dbReference type="PDB" id="6NEQ"/>
    </source>
</evidence>
<evidence type="ECO:0007829" key="6">
    <source>
        <dbReference type="PDB" id="6NF8"/>
    </source>
</evidence>
<feature type="chain" id="PRO_0000087702" description="Small ribosomal subunit protein mS22">
    <location>
        <begin position="1"/>
        <end position="359"/>
    </location>
</feature>
<feature type="sequence conflict" description="In Ref. 2; AA sequence." evidence="3" ref="2">
    <original>T</original>
    <variation>V</variation>
    <location>
        <position position="135"/>
    </location>
</feature>
<feature type="strand" evidence="5">
    <location>
        <begin position="69"/>
        <end position="71"/>
    </location>
</feature>
<feature type="helix" evidence="5">
    <location>
        <begin position="72"/>
        <end position="82"/>
    </location>
</feature>
<feature type="helix" evidence="5">
    <location>
        <begin position="86"/>
        <end position="89"/>
    </location>
</feature>
<feature type="strand" evidence="5">
    <location>
        <begin position="101"/>
        <end position="105"/>
    </location>
</feature>
<feature type="helix" evidence="5">
    <location>
        <begin position="107"/>
        <end position="124"/>
    </location>
</feature>
<feature type="strand" evidence="5">
    <location>
        <begin position="140"/>
        <end position="143"/>
    </location>
</feature>
<feature type="helix" evidence="5">
    <location>
        <begin position="145"/>
        <end position="147"/>
    </location>
</feature>
<feature type="strand" evidence="5">
    <location>
        <begin position="154"/>
        <end position="159"/>
    </location>
</feature>
<feature type="strand" evidence="6">
    <location>
        <begin position="162"/>
        <end position="164"/>
    </location>
</feature>
<feature type="helix" evidence="5">
    <location>
        <begin position="166"/>
        <end position="168"/>
    </location>
</feature>
<feature type="strand" evidence="5">
    <location>
        <begin position="172"/>
        <end position="175"/>
    </location>
</feature>
<feature type="turn" evidence="5">
    <location>
        <begin position="176"/>
        <end position="178"/>
    </location>
</feature>
<feature type="strand" evidence="5">
    <location>
        <begin position="179"/>
        <end position="182"/>
    </location>
</feature>
<feature type="helix" evidence="5">
    <location>
        <begin position="185"/>
        <end position="195"/>
    </location>
</feature>
<feature type="strand" evidence="6">
    <location>
        <begin position="207"/>
        <end position="210"/>
    </location>
</feature>
<feature type="helix" evidence="5">
    <location>
        <begin position="211"/>
        <end position="219"/>
    </location>
</feature>
<feature type="helix" evidence="5">
    <location>
        <begin position="223"/>
        <end position="233"/>
    </location>
</feature>
<feature type="helix" evidence="5">
    <location>
        <begin position="239"/>
        <end position="255"/>
    </location>
</feature>
<feature type="helix" evidence="5">
    <location>
        <begin position="267"/>
        <end position="277"/>
    </location>
</feature>
<feature type="helix" evidence="5">
    <location>
        <begin position="281"/>
        <end position="289"/>
    </location>
</feature>
<feature type="helix" evidence="5">
    <location>
        <begin position="293"/>
        <end position="305"/>
    </location>
</feature>
<feature type="helix" evidence="5">
    <location>
        <begin position="311"/>
        <end position="318"/>
    </location>
</feature>
<feature type="strand" evidence="6">
    <location>
        <begin position="322"/>
        <end position="324"/>
    </location>
</feature>
<feature type="helix" evidence="5">
    <location>
        <begin position="325"/>
        <end position="332"/>
    </location>
</feature>
<feature type="helix" evidence="5">
    <location>
        <begin position="338"/>
        <end position="352"/>
    </location>
</feature>
<keyword id="KW-0002">3D-structure</keyword>
<keyword id="KW-0903">Direct protein sequencing</keyword>
<keyword id="KW-0496">Mitochondrion</keyword>
<keyword id="KW-1185">Reference proteome</keyword>
<keyword id="KW-0687">Ribonucleoprotein</keyword>
<keyword id="KW-0689">Ribosomal protein</keyword>
<proteinExistence type="evidence at protein level"/>
<accession>P82649</accession>
<accession>Q2NL06</accession>
<gene>
    <name type="primary">MRPS22</name>
</gene>
<name>RT22_BOVIN</name>
<organism>
    <name type="scientific">Bos taurus</name>
    <name type="common">Bovine</name>
    <dbReference type="NCBI Taxonomy" id="9913"/>
    <lineage>
        <taxon>Eukaryota</taxon>
        <taxon>Metazoa</taxon>
        <taxon>Chordata</taxon>
        <taxon>Craniata</taxon>
        <taxon>Vertebrata</taxon>
        <taxon>Euteleostomi</taxon>
        <taxon>Mammalia</taxon>
        <taxon>Eutheria</taxon>
        <taxon>Laurasiatheria</taxon>
        <taxon>Artiodactyla</taxon>
        <taxon>Ruminantia</taxon>
        <taxon>Pecora</taxon>
        <taxon>Bovidae</taxon>
        <taxon>Bovinae</taxon>
        <taxon>Bos</taxon>
    </lineage>
</organism>
<sequence>MATLRVSLSLWNLHAGSRGAGRVYFRARARPRPGDLFQPLPGVCGAGTPCRGLCSEAESGSPKIKKPTFMDEEVQSILIKMTGLDLLKIFKPAVQETKPPTYKLMTQAQLEEATRQAIEAAKVRLKMPPVLEERTPINDVLAEDKILEGTETGKYVFTDISYSIPHRERFIVVREPSGTLRKASWEERDRMIQIYFPKEGRRVLTPVIFREENLQTMYSQDRHVDVLNLCVAQFEPDSADYIKVHHQTYEDIDKYGKYDLLRSTRHFGGMAWYFVNKKKIDGLLIDQIQRDLVDDAASLVQLYHILHPDGQSAQEAKEQAAEGLQLIKVFAKTEAQKGAYIELTLQAYQEAFISSSAAS</sequence>
<dbReference type="EMBL" id="BC111265">
    <property type="protein sequence ID" value="AAI11266.1"/>
    <property type="molecule type" value="mRNA"/>
</dbReference>
<dbReference type="RefSeq" id="NP_001039784.1">
    <property type="nucleotide sequence ID" value="NM_001046319.2"/>
</dbReference>
<dbReference type="PDB" id="3JD5">
    <property type="method" value="EM"/>
    <property type="resolution" value="7.00 A"/>
    <property type="chains" value="a=1-359"/>
</dbReference>
<dbReference type="PDB" id="6NEQ">
    <property type="method" value="EM"/>
    <property type="resolution" value="3.32 A"/>
    <property type="chains" value="a=1-359"/>
</dbReference>
<dbReference type="PDB" id="6NF8">
    <property type="method" value="EM"/>
    <property type="resolution" value="3.48 A"/>
    <property type="chains" value="a=1-359"/>
</dbReference>
<dbReference type="PDBsum" id="3JD5"/>
<dbReference type="PDBsum" id="6NEQ"/>
<dbReference type="PDBsum" id="6NF8"/>
<dbReference type="EMDB" id="EMD-9358"/>
<dbReference type="EMDB" id="EMD-9362"/>
<dbReference type="SMR" id="P82649"/>
<dbReference type="CORUM" id="P82649"/>
<dbReference type="FunCoup" id="P82649">
    <property type="interactions" value="1439"/>
</dbReference>
<dbReference type="IntAct" id="P82649">
    <property type="interactions" value="1"/>
</dbReference>
<dbReference type="STRING" id="9913.ENSBTAP00000056612"/>
<dbReference type="PaxDb" id="9913-ENSBTAP00000056612"/>
<dbReference type="GeneID" id="532044"/>
<dbReference type="KEGG" id="bta:532044"/>
<dbReference type="CTD" id="56945"/>
<dbReference type="eggNOG" id="KOG3890">
    <property type="taxonomic scope" value="Eukaryota"/>
</dbReference>
<dbReference type="InParanoid" id="P82649"/>
<dbReference type="OrthoDB" id="10052321at2759"/>
<dbReference type="Proteomes" id="UP000009136">
    <property type="component" value="Unplaced"/>
</dbReference>
<dbReference type="GO" id="GO:0005743">
    <property type="term" value="C:mitochondrial inner membrane"/>
    <property type="evidence" value="ECO:0000304"/>
    <property type="project" value="Reactome"/>
</dbReference>
<dbReference type="GO" id="GO:0005763">
    <property type="term" value="C:mitochondrial small ribosomal subunit"/>
    <property type="evidence" value="ECO:0000314"/>
    <property type="project" value="UniProtKB"/>
</dbReference>
<dbReference type="GO" id="GO:0003735">
    <property type="term" value="F:structural constituent of ribosome"/>
    <property type="evidence" value="ECO:0007005"/>
    <property type="project" value="UniProtKB"/>
</dbReference>
<dbReference type="GO" id="GO:0032543">
    <property type="term" value="P:mitochondrial translation"/>
    <property type="evidence" value="ECO:0007005"/>
    <property type="project" value="UniProtKB"/>
</dbReference>
<dbReference type="InterPro" id="IPR019374">
    <property type="entry name" value="Ribosomal_mS22"/>
</dbReference>
<dbReference type="PANTHER" id="PTHR13071">
    <property type="entry name" value="MITOCHONDRIAL 28S RIBOSOMAL PROTEIN S22"/>
    <property type="match status" value="1"/>
</dbReference>
<dbReference type="PANTHER" id="PTHR13071:SF4">
    <property type="entry name" value="SMALL RIBOSOMAL SUBUNIT PROTEIN MS22"/>
    <property type="match status" value="1"/>
</dbReference>
<dbReference type="Pfam" id="PF10245">
    <property type="entry name" value="MRP-S22"/>
    <property type="match status" value="1"/>
</dbReference>
<reference key="1">
    <citation type="submission" date="2005-12" db="EMBL/GenBank/DDBJ databases">
        <authorList>
            <consortium name="NIH - Mammalian Gene Collection (MGC) project"/>
        </authorList>
    </citation>
    <scope>NUCLEOTIDE SEQUENCE [LARGE SCALE MRNA]</scope>
    <source>
        <strain>Crossbred X Angus</strain>
        <tissue>Liver</tissue>
    </source>
</reference>
<reference key="2">
    <citation type="journal article" date="2000" name="J. Biol. Chem.">
        <title>A proteomics approach to the identification of mammalian mitochondrial small subunit ribosomal proteins.</title>
        <authorList>
            <person name="Koc E.C."/>
            <person name="Burkhart W."/>
            <person name="Blackburn K."/>
            <person name="Moseley A."/>
            <person name="Koc H."/>
            <person name="Spremulli L.L."/>
        </authorList>
    </citation>
    <scope>PROTEIN SEQUENCE OF 104-115; 125-145; 279-290 AND 329-337</scope>
    <scope>IDENTIFICATION IN THE 28S MITOCHONDRIAL RIBOSOME</scope>
    <scope>SUBCELLULAR LOCATION</scope>
    <source>
        <tissue>Liver</tissue>
    </source>
</reference>
<reference evidence="4" key="3">
    <citation type="journal article" date="2014" name="Proc. Natl. Acad. Sci. U.S.A.">
        <title>Cryo-EM structure of the small subunit of the mammalian mitochondrial ribosome.</title>
        <authorList>
            <person name="Kaushal P.S."/>
            <person name="Sharma M.R."/>
            <person name="Booth T.M."/>
            <person name="Haque E.M."/>
            <person name="Tung C.S."/>
            <person name="Sanbonmatsu K.Y."/>
            <person name="Spremulli L.L."/>
            <person name="Agrawal R.K."/>
        </authorList>
    </citation>
    <scope>STRUCTURE BY ELECTRON MICROSCOPY (7.00 ANGSTROMS)</scope>
    <scope>SUBCELLULAR LOCATION</scope>
    <scope>SUBUNIT</scope>
</reference>
<protein>
    <recommendedName>
        <fullName evidence="3">Small ribosomal subunit protein mS22</fullName>
    </recommendedName>
    <alternativeName>
        <fullName>28S ribosomal protein S22, mitochondrial</fullName>
        <shortName>MRP-S22</shortName>
        <shortName>S22mt</shortName>
    </alternativeName>
</protein>
<comment type="subunit">
    <text evidence="1 2">Component of the mitochondrial ribosome small subunit (28S) which comprises a 12S rRNA and about 30 distinct proteins.</text>
</comment>
<comment type="subcellular location">
    <subcellularLocation>
        <location evidence="1 2">Mitochondrion</location>
    </subcellularLocation>
</comment>
<comment type="similarity">
    <text evidence="3">Belongs to the mitochondrion-specific ribosomal protein mS22 family.</text>
</comment>